<evidence type="ECO:0000255" key="1">
    <source>
        <dbReference type="HAMAP-Rule" id="MF_01396"/>
    </source>
</evidence>
<dbReference type="EMBL" id="AP007255">
    <property type="protein sequence ID" value="BAE52798.1"/>
    <property type="molecule type" value="Genomic_DNA"/>
</dbReference>
<dbReference type="RefSeq" id="WP_009870554.1">
    <property type="nucleotide sequence ID" value="NC_007626.1"/>
</dbReference>
<dbReference type="SMR" id="Q2W027"/>
<dbReference type="STRING" id="342108.amb3994"/>
<dbReference type="KEGG" id="mag:amb3994"/>
<dbReference type="HOGENOM" id="CLU_148047_4_1_5"/>
<dbReference type="OrthoDB" id="9811093at2"/>
<dbReference type="Proteomes" id="UP000007058">
    <property type="component" value="Chromosome"/>
</dbReference>
<dbReference type="GO" id="GO:0005886">
    <property type="term" value="C:plasma membrane"/>
    <property type="evidence" value="ECO:0007669"/>
    <property type="project" value="UniProtKB-SubCell"/>
</dbReference>
<dbReference type="GO" id="GO:0045259">
    <property type="term" value="C:proton-transporting ATP synthase complex"/>
    <property type="evidence" value="ECO:0007669"/>
    <property type="project" value="UniProtKB-KW"/>
</dbReference>
<dbReference type="GO" id="GO:0033177">
    <property type="term" value="C:proton-transporting two-sector ATPase complex, proton-transporting domain"/>
    <property type="evidence" value="ECO:0007669"/>
    <property type="project" value="InterPro"/>
</dbReference>
<dbReference type="GO" id="GO:0008289">
    <property type="term" value="F:lipid binding"/>
    <property type="evidence" value="ECO:0007669"/>
    <property type="project" value="UniProtKB-KW"/>
</dbReference>
<dbReference type="GO" id="GO:0046933">
    <property type="term" value="F:proton-transporting ATP synthase activity, rotational mechanism"/>
    <property type="evidence" value="ECO:0007669"/>
    <property type="project" value="UniProtKB-UniRule"/>
</dbReference>
<dbReference type="CDD" id="cd18182">
    <property type="entry name" value="ATP-synt_Fo_c_ATP5G3"/>
    <property type="match status" value="1"/>
</dbReference>
<dbReference type="Gene3D" id="1.20.20.10">
    <property type="entry name" value="F1F0 ATP synthase subunit C"/>
    <property type="match status" value="1"/>
</dbReference>
<dbReference type="HAMAP" id="MF_01396">
    <property type="entry name" value="ATP_synth_c_bact"/>
    <property type="match status" value="1"/>
</dbReference>
<dbReference type="InterPro" id="IPR000454">
    <property type="entry name" value="ATP_synth_F0_csu"/>
</dbReference>
<dbReference type="InterPro" id="IPR020537">
    <property type="entry name" value="ATP_synth_F0_csu_DDCD_BS"/>
</dbReference>
<dbReference type="InterPro" id="IPR038662">
    <property type="entry name" value="ATP_synth_F0_csu_sf"/>
</dbReference>
<dbReference type="InterPro" id="IPR002379">
    <property type="entry name" value="ATPase_proteolipid_c-like_dom"/>
</dbReference>
<dbReference type="InterPro" id="IPR035921">
    <property type="entry name" value="F/V-ATP_Csub_sf"/>
</dbReference>
<dbReference type="NCBIfam" id="NF005733">
    <property type="entry name" value="PRK07558.1"/>
    <property type="match status" value="1"/>
</dbReference>
<dbReference type="PANTHER" id="PTHR10031">
    <property type="entry name" value="ATP SYNTHASE LIPID-BINDING PROTEIN, MITOCHONDRIAL"/>
    <property type="match status" value="1"/>
</dbReference>
<dbReference type="PANTHER" id="PTHR10031:SF0">
    <property type="entry name" value="ATPASE PROTEIN 9"/>
    <property type="match status" value="1"/>
</dbReference>
<dbReference type="Pfam" id="PF00137">
    <property type="entry name" value="ATP-synt_C"/>
    <property type="match status" value="1"/>
</dbReference>
<dbReference type="PRINTS" id="PR00124">
    <property type="entry name" value="ATPASEC"/>
</dbReference>
<dbReference type="SUPFAM" id="SSF81333">
    <property type="entry name" value="F1F0 ATP synthase subunit C"/>
    <property type="match status" value="1"/>
</dbReference>
<dbReference type="PROSITE" id="PS00605">
    <property type="entry name" value="ATPASE_C"/>
    <property type="match status" value="1"/>
</dbReference>
<proteinExistence type="inferred from homology"/>
<sequence length="74" mass="7452">MEASAAKFIGAGLAAIGMIGSGIGVGNIWANLIATVGRNPSAKANVELYGWIGFAVTEAIALFALVVALMVLFA</sequence>
<name>ATPL_PARM1</name>
<gene>
    <name evidence="1" type="primary">atpE</name>
    <name type="ordered locus">amb3994</name>
</gene>
<comment type="function">
    <text evidence="1">F(1)F(0) ATP synthase produces ATP from ADP in the presence of a proton or sodium gradient. F-type ATPases consist of two structural domains, F(1) containing the extramembraneous catalytic core and F(0) containing the membrane proton channel, linked together by a central stalk and a peripheral stalk. During catalysis, ATP synthesis in the catalytic domain of F(1) is coupled via a rotary mechanism of the central stalk subunits to proton translocation.</text>
</comment>
<comment type="function">
    <text evidence="1">Key component of the F(0) channel; it plays a direct role in translocation across the membrane. A homomeric c-ring of between 10-14 subunits forms the central stalk rotor element with the F(1) delta and epsilon subunits.</text>
</comment>
<comment type="subunit">
    <text evidence="1">F-type ATPases have 2 components, F(1) - the catalytic core - and F(0) - the membrane proton channel. F(1) has five subunits: alpha(3), beta(3), gamma(1), delta(1), epsilon(1). F(0) has three main subunits: a(1), b(2) and c(10-14). The alpha and beta chains form an alternating ring which encloses part of the gamma chain. F(1) is attached to F(0) by a central stalk formed by the gamma and epsilon chains, while a peripheral stalk is formed by the delta and b chains.</text>
</comment>
<comment type="subcellular location">
    <subcellularLocation>
        <location evidence="1">Cell inner membrane</location>
        <topology evidence="1">Multi-pass membrane protein</topology>
    </subcellularLocation>
</comment>
<comment type="similarity">
    <text evidence="1">Belongs to the ATPase C chain family.</text>
</comment>
<feature type="chain" id="PRO_1000184410" description="ATP synthase subunit c">
    <location>
        <begin position="1"/>
        <end position="74"/>
    </location>
</feature>
<feature type="transmembrane region" description="Helical" evidence="1">
    <location>
        <begin position="8"/>
        <end position="28"/>
    </location>
</feature>
<feature type="transmembrane region" description="Helical" evidence="1">
    <location>
        <begin position="52"/>
        <end position="72"/>
    </location>
</feature>
<feature type="site" description="Reversibly protonated during proton transport" evidence="1">
    <location>
        <position position="58"/>
    </location>
</feature>
<protein>
    <recommendedName>
        <fullName evidence="1">ATP synthase subunit c</fullName>
    </recommendedName>
    <alternativeName>
        <fullName evidence="1">ATP synthase F(0) sector subunit c</fullName>
    </alternativeName>
    <alternativeName>
        <fullName evidence="1">F-type ATPase subunit c</fullName>
        <shortName evidence="1">F-ATPase subunit c</shortName>
    </alternativeName>
    <alternativeName>
        <fullName evidence="1">Lipid-binding protein</fullName>
    </alternativeName>
</protein>
<reference key="1">
    <citation type="journal article" date="2005" name="DNA Res.">
        <title>Complete genome sequence of the facultative anaerobic magnetotactic bacterium Magnetospirillum sp. strain AMB-1.</title>
        <authorList>
            <person name="Matsunaga T."/>
            <person name="Okamura Y."/>
            <person name="Fukuda Y."/>
            <person name="Wahyudi A.T."/>
            <person name="Murase Y."/>
            <person name="Takeyama H."/>
        </authorList>
    </citation>
    <scope>NUCLEOTIDE SEQUENCE [LARGE SCALE GENOMIC DNA]</scope>
    <source>
        <strain>ATCC 700264 / AMB-1</strain>
    </source>
</reference>
<organism>
    <name type="scientific">Paramagnetospirillum magneticum (strain ATCC 700264 / AMB-1)</name>
    <name type="common">Magnetospirillum magneticum</name>
    <dbReference type="NCBI Taxonomy" id="342108"/>
    <lineage>
        <taxon>Bacteria</taxon>
        <taxon>Pseudomonadati</taxon>
        <taxon>Pseudomonadota</taxon>
        <taxon>Alphaproteobacteria</taxon>
        <taxon>Rhodospirillales</taxon>
        <taxon>Magnetospirillaceae</taxon>
        <taxon>Paramagnetospirillum</taxon>
    </lineage>
</organism>
<accession>Q2W027</accession>
<keyword id="KW-0066">ATP synthesis</keyword>
<keyword id="KW-0997">Cell inner membrane</keyword>
<keyword id="KW-1003">Cell membrane</keyword>
<keyword id="KW-0138">CF(0)</keyword>
<keyword id="KW-0375">Hydrogen ion transport</keyword>
<keyword id="KW-0406">Ion transport</keyword>
<keyword id="KW-0446">Lipid-binding</keyword>
<keyword id="KW-0472">Membrane</keyword>
<keyword id="KW-0812">Transmembrane</keyword>
<keyword id="KW-1133">Transmembrane helix</keyword>
<keyword id="KW-0813">Transport</keyword>